<evidence type="ECO:0000255" key="1">
    <source>
        <dbReference type="HAMAP-Rule" id="MF_01384"/>
    </source>
</evidence>
<proteinExistence type="inferred from homology"/>
<organism>
    <name type="scientific">Brucella ovis (strain ATCC 25840 / 63/290 / NCTC 10512)</name>
    <dbReference type="NCBI Taxonomy" id="444178"/>
    <lineage>
        <taxon>Bacteria</taxon>
        <taxon>Pseudomonadati</taxon>
        <taxon>Pseudomonadota</taxon>
        <taxon>Alphaproteobacteria</taxon>
        <taxon>Hyphomicrobiales</taxon>
        <taxon>Brucellaceae</taxon>
        <taxon>Brucella/Ochrobactrum group</taxon>
        <taxon>Brucella</taxon>
    </lineage>
</organism>
<dbReference type="EMBL" id="CP000708">
    <property type="protein sequence ID" value="ABQ60929.1"/>
    <property type="molecule type" value="Genomic_DNA"/>
</dbReference>
<dbReference type="RefSeq" id="WP_004689446.1">
    <property type="nucleotide sequence ID" value="NC_009505.1"/>
</dbReference>
<dbReference type="SMR" id="A5VNL0"/>
<dbReference type="KEGG" id="bov:BOV_0281"/>
<dbReference type="HOGENOM" id="CLU_056339_2_0_5"/>
<dbReference type="PhylomeDB" id="A5VNL0"/>
<dbReference type="Proteomes" id="UP000006383">
    <property type="component" value="Chromosome I"/>
</dbReference>
<dbReference type="GO" id="GO:0005737">
    <property type="term" value="C:cytoplasm"/>
    <property type="evidence" value="ECO:0007669"/>
    <property type="project" value="UniProtKB-SubCell"/>
</dbReference>
<dbReference type="GO" id="GO:0016151">
    <property type="term" value="F:nickel cation binding"/>
    <property type="evidence" value="ECO:0007669"/>
    <property type="project" value="UniProtKB-UniRule"/>
</dbReference>
<dbReference type="HAMAP" id="MF_01384">
    <property type="entry name" value="UreD"/>
    <property type="match status" value="1"/>
</dbReference>
<dbReference type="InterPro" id="IPR002669">
    <property type="entry name" value="UreD"/>
</dbReference>
<dbReference type="PANTHER" id="PTHR33643">
    <property type="entry name" value="UREASE ACCESSORY PROTEIN D"/>
    <property type="match status" value="1"/>
</dbReference>
<dbReference type="PANTHER" id="PTHR33643:SF1">
    <property type="entry name" value="UREASE ACCESSORY PROTEIN D"/>
    <property type="match status" value="1"/>
</dbReference>
<dbReference type="Pfam" id="PF01774">
    <property type="entry name" value="UreD"/>
    <property type="match status" value="1"/>
</dbReference>
<name>URED1_BRUO2</name>
<sequence>MLIINDNNLSGLSLQRVNGTGELSVQFKDGRSRISRLYQEGAAKIRMPQAVTGPLEAILINTSGGLTGGDRLKWDVALDDGASAVITTQACERIYRSGGGEARIATRLKAAKGTRLAWLPQETILFNRSILSRRLDVELEEGAQMLVVEATVFGRLAMGERVVAARFADRWRVRLGGRVIHAEEFRLGPDVGAELQAPAVAGGACAMATVLMVCEQAGRHLETARAIIGEEGGCSLWRVGKASKLVVRLYAPDSYALRRRLCPLVALLNGKAGLPKVWTI</sequence>
<gene>
    <name evidence="1" type="primary">ureD1</name>
    <name type="synonym">ureD-1</name>
    <name type="ordered locus">BOV_0281</name>
</gene>
<comment type="function">
    <text evidence="1">Required for maturation of urease via the functional incorporation of the urease nickel metallocenter.</text>
</comment>
<comment type="subunit">
    <text evidence="1">UreD, UreF and UreG form a complex that acts as a GTP-hydrolysis-dependent molecular chaperone, activating the urease apoprotein by helping to assemble the nickel containing metallocenter of UreC. The UreE protein probably delivers the nickel.</text>
</comment>
<comment type="subcellular location">
    <subcellularLocation>
        <location evidence="1">Cytoplasm</location>
    </subcellularLocation>
</comment>
<comment type="similarity">
    <text evidence="1">Belongs to the UreD family.</text>
</comment>
<feature type="chain" id="PRO_0000340425" description="Urease accessory protein UreD 1">
    <location>
        <begin position="1"/>
        <end position="280"/>
    </location>
</feature>
<reference key="1">
    <citation type="journal article" date="2009" name="PLoS ONE">
        <title>Genome degradation in Brucella ovis corresponds with narrowing of its host range and tissue tropism.</title>
        <authorList>
            <person name="Tsolis R.M."/>
            <person name="Seshadri R."/>
            <person name="Santos R.L."/>
            <person name="Sangari F.J."/>
            <person name="Lobo J.M."/>
            <person name="de Jong M.F."/>
            <person name="Ren Q."/>
            <person name="Myers G."/>
            <person name="Brinkac L.M."/>
            <person name="Nelson W.C."/>
            <person name="Deboy R.T."/>
            <person name="Angiuoli S."/>
            <person name="Khouri H."/>
            <person name="Dimitrov G."/>
            <person name="Robinson J.R."/>
            <person name="Mulligan S."/>
            <person name="Walker R.L."/>
            <person name="Elzer P.E."/>
            <person name="Hassan K.A."/>
            <person name="Paulsen I.T."/>
        </authorList>
    </citation>
    <scope>NUCLEOTIDE SEQUENCE [LARGE SCALE GENOMIC DNA]</scope>
    <source>
        <strain>ATCC 25840 / 63/290 / NCTC 10512</strain>
    </source>
</reference>
<keyword id="KW-0143">Chaperone</keyword>
<keyword id="KW-0963">Cytoplasm</keyword>
<keyword id="KW-0996">Nickel insertion</keyword>
<protein>
    <recommendedName>
        <fullName evidence="1">Urease accessory protein UreD 1</fullName>
    </recommendedName>
</protein>
<accession>A5VNL0</accession>